<protein>
    <recommendedName>
        <fullName evidence="1">Small ribosomal subunit protein uS19</fullName>
    </recommendedName>
    <alternativeName>
        <fullName evidence="2">30S ribosomal protein S19</fullName>
    </alternativeName>
</protein>
<proteinExistence type="inferred from homology"/>
<name>RS19_STRSV</name>
<organism>
    <name type="scientific">Streptococcus sanguinis (strain SK36)</name>
    <dbReference type="NCBI Taxonomy" id="388919"/>
    <lineage>
        <taxon>Bacteria</taxon>
        <taxon>Bacillati</taxon>
        <taxon>Bacillota</taxon>
        <taxon>Bacilli</taxon>
        <taxon>Lactobacillales</taxon>
        <taxon>Streptococcaceae</taxon>
        <taxon>Streptococcus</taxon>
    </lineage>
</organism>
<feature type="chain" id="PRO_1000051133" description="Small ribosomal subunit protein uS19">
    <location>
        <begin position="1"/>
        <end position="93"/>
    </location>
</feature>
<dbReference type="EMBL" id="CP000387">
    <property type="protein sequence ID" value="ABN43572.1"/>
    <property type="molecule type" value="Genomic_DNA"/>
</dbReference>
<dbReference type="RefSeq" id="WP_000533766.1">
    <property type="nucleotide sequence ID" value="NZ_CAXTYR010000005.1"/>
</dbReference>
<dbReference type="RefSeq" id="YP_001034122.1">
    <property type="nucleotide sequence ID" value="NC_009009.1"/>
</dbReference>
<dbReference type="SMR" id="A3CK67"/>
<dbReference type="STRING" id="388919.SSA_0111"/>
<dbReference type="GeneID" id="93920908"/>
<dbReference type="KEGG" id="ssa:SSA_0111"/>
<dbReference type="PATRIC" id="fig|388919.9.peg.104"/>
<dbReference type="eggNOG" id="COG0185">
    <property type="taxonomic scope" value="Bacteria"/>
</dbReference>
<dbReference type="HOGENOM" id="CLU_144911_0_1_9"/>
<dbReference type="OrthoDB" id="9797833at2"/>
<dbReference type="PRO" id="PR:A3CK67"/>
<dbReference type="Proteomes" id="UP000002148">
    <property type="component" value="Chromosome"/>
</dbReference>
<dbReference type="GO" id="GO:0005737">
    <property type="term" value="C:cytoplasm"/>
    <property type="evidence" value="ECO:0007669"/>
    <property type="project" value="UniProtKB-ARBA"/>
</dbReference>
<dbReference type="GO" id="GO:0015935">
    <property type="term" value="C:small ribosomal subunit"/>
    <property type="evidence" value="ECO:0007669"/>
    <property type="project" value="InterPro"/>
</dbReference>
<dbReference type="GO" id="GO:0019843">
    <property type="term" value="F:rRNA binding"/>
    <property type="evidence" value="ECO:0007669"/>
    <property type="project" value="UniProtKB-UniRule"/>
</dbReference>
<dbReference type="GO" id="GO:0003735">
    <property type="term" value="F:structural constituent of ribosome"/>
    <property type="evidence" value="ECO:0007669"/>
    <property type="project" value="InterPro"/>
</dbReference>
<dbReference type="GO" id="GO:0000028">
    <property type="term" value="P:ribosomal small subunit assembly"/>
    <property type="evidence" value="ECO:0007669"/>
    <property type="project" value="TreeGrafter"/>
</dbReference>
<dbReference type="GO" id="GO:0006412">
    <property type="term" value="P:translation"/>
    <property type="evidence" value="ECO:0007669"/>
    <property type="project" value="UniProtKB-UniRule"/>
</dbReference>
<dbReference type="FunFam" id="3.30.860.10:FF:000001">
    <property type="entry name" value="30S ribosomal protein S19"/>
    <property type="match status" value="1"/>
</dbReference>
<dbReference type="Gene3D" id="3.30.860.10">
    <property type="entry name" value="30s Ribosomal Protein S19, Chain A"/>
    <property type="match status" value="1"/>
</dbReference>
<dbReference type="HAMAP" id="MF_00531">
    <property type="entry name" value="Ribosomal_uS19"/>
    <property type="match status" value="1"/>
</dbReference>
<dbReference type="InterPro" id="IPR002222">
    <property type="entry name" value="Ribosomal_uS19"/>
</dbReference>
<dbReference type="InterPro" id="IPR005732">
    <property type="entry name" value="Ribosomal_uS19_bac-type"/>
</dbReference>
<dbReference type="InterPro" id="IPR020934">
    <property type="entry name" value="Ribosomal_uS19_CS"/>
</dbReference>
<dbReference type="InterPro" id="IPR023575">
    <property type="entry name" value="Ribosomal_uS19_SF"/>
</dbReference>
<dbReference type="NCBIfam" id="TIGR01050">
    <property type="entry name" value="rpsS_bact"/>
    <property type="match status" value="1"/>
</dbReference>
<dbReference type="PANTHER" id="PTHR11880">
    <property type="entry name" value="RIBOSOMAL PROTEIN S19P FAMILY MEMBER"/>
    <property type="match status" value="1"/>
</dbReference>
<dbReference type="PANTHER" id="PTHR11880:SF8">
    <property type="entry name" value="SMALL RIBOSOMAL SUBUNIT PROTEIN US19M"/>
    <property type="match status" value="1"/>
</dbReference>
<dbReference type="Pfam" id="PF00203">
    <property type="entry name" value="Ribosomal_S19"/>
    <property type="match status" value="1"/>
</dbReference>
<dbReference type="PIRSF" id="PIRSF002144">
    <property type="entry name" value="Ribosomal_S19"/>
    <property type="match status" value="1"/>
</dbReference>
<dbReference type="PRINTS" id="PR00975">
    <property type="entry name" value="RIBOSOMALS19"/>
</dbReference>
<dbReference type="SUPFAM" id="SSF54570">
    <property type="entry name" value="Ribosomal protein S19"/>
    <property type="match status" value="1"/>
</dbReference>
<dbReference type="PROSITE" id="PS00323">
    <property type="entry name" value="RIBOSOMAL_S19"/>
    <property type="match status" value="1"/>
</dbReference>
<keyword id="KW-1185">Reference proteome</keyword>
<keyword id="KW-0687">Ribonucleoprotein</keyword>
<keyword id="KW-0689">Ribosomal protein</keyword>
<keyword id="KW-0694">RNA-binding</keyword>
<keyword id="KW-0699">rRNA-binding</keyword>
<sequence length="93" mass="10750">MGRSLKKGPFVDEHLMKKVEAQANDEKKKVIKTWSRRSTIFPSFIGYTIAVYDGRKHVPVYIQEDMVGHKLGEFAPTRTYKGHAADDKKTRRK</sequence>
<comment type="function">
    <text evidence="1">Protein S19 forms a complex with S13 that binds strongly to the 16S ribosomal RNA.</text>
</comment>
<comment type="similarity">
    <text evidence="1">Belongs to the universal ribosomal protein uS19 family.</text>
</comment>
<accession>A3CK67</accession>
<evidence type="ECO:0000255" key="1">
    <source>
        <dbReference type="HAMAP-Rule" id="MF_00531"/>
    </source>
</evidence>
<evidence type="ECO:0000305" key="2"/>
<gene>
    <name evidence="1" type="primary">rpsS</name>
    <name type="ordered locus">SSA_0111</name>
</gene>
<reference key="1">
    <citation type="journal article" date="2007" name="J. Bacteriol.">
        <title>Genome of the opportunistic pathogen Streptococcus sanguinis.</title>
        <authorList>
            <person name="Xu P."/>
            <person name="Alves J.M."/>
            <person name="Kitten T."/>
            <person name="Brown A."/>
            <person name="Chen Z."/>
            <person name="Ozaki L.S."/>
            <person name="Manque P."/>
            <person name="Ge X."/>
            <person name="Serrano M.G."/>
            <person name="Puiu D."/>
            <person name="Hendricks S."/>
            <person name="Wang Y."/>
            <person name="Chaplin M.D."/>
            <person name="Akan D."/>
            <person name="Paik S."/>
            <person name="Peterson D.L."/>
            <person name="Macrina F.L."/>
            <person name="Buck G.A."/>
        </authorList>
    </citation>
    <scope>NUCLEOTIDE SEQUENCE [LARGE SCALE GENOMIC DNA]</scope>
    <source>
        <strain>SK36</strain>
    </source>
</reference>